<name>CMAS1_MYCTU</name>
<reference key="1">
    <citation type="journal article" date="1998" name="Nature">
        <title>Deciphering the biology of Mycobacterium tuberculosis from the complete genome sequence.</title>
        <authorList>
            <person name="Cole S.T."/>
            <person name="Brosch R."/>
            <person name="Parkhill J."/>
            <person name="Garnier T."/>
            <person name="Churcher C.M."/>
            <person name="Harris D.E."/>
            <person name="Gordon S.V."/>
            <person name="Eiglmeier K."/>
            <person name="Gas S."/>
            <person name="Barry C.E. III"/>
            <person name="Tekaia F."/>
            <person name="Badcock K."/>
            <person name="Basham D."/>
            <person name="Brown D."/>
            <person name="Chillingworth T."/>
            <person name="Connor R."/>
            <person name="Davies R.M."/>
            <person name="Devlin K."/>
            <person name="Feltwell T."/>
            <person name="Gentles S."/>
            <person name="Hamlin N."/>
            <person name="Holroyd S."/>
            <person name="Hornsby T."/>
            <person name="Jagels K."/>
            <person name="Krogh A."/>
            <person name="McLean J."/>
            <person name="Moule S."/>
            <person name="Murphy L.D."/>
            <person name="Oliver S."/>
            <person name="Osborne J."/>
            <person name="Quail M.A."/>
            <person name="Rajandream M.A."/>
            <person name="Rogers J."/>
            <person name="Rutter S."/>
            <person name="Seeger K."/>
            <person name="Skelton S."/>
            <person name="Squares S."/>
            <person name="Squares R."/>
            <person name="Sulston J.E."/>
            <person name="Taylor K."/>
            <person name="Whitehead S."/>
            <person name="Barrell B.G."/>
        </authorList>
    </citation>
    <scope>NUCLEOTIDE SEQUENCE [LARGE SCALE GENOMIC DNA]</scope>
    <source>
        <strain>ATCC 25618 / H37Rv</strain>
    </source>
</reference>
<reference key="2">
    <citation type="journal article" date="1995" name="J. Biol. Chem.">
        <title>The biosynthesis of cyclopropanated mycolic acids in Mycobacterium tuberculosis. Identification and functional analysis of CMAS-2.</title>
        <authorList>
            <person name="George K.M."/>
            <person name="Yuan Y."/>
            <person name="Sherman D.R."/>
            <person name="Barry C.E. III"/>
        </authorList>
    </citation>
    <scope>FUNCTION AS A CYCLOPROPANE SYNTHASE</scope>
    <scope>CATALYTIC ACTIVITY</scope>
    <scope>NOMENCLATURE</scope>
    <source>
        <strain>ATCC 25618 / H37Rv</strain>
    </source>
</reference>
<reference key="3">
    <citation type="journal article" date="2011" name="Mol. Cell. Proteomics">
        <title>Proteogenomic analysis of Mycobacterium tuberculosis by high resolution mass spectrometry.</title>
        <authorList>
            <person name="Kelkar D.S."/>
            <person name="Kumar D."/>
            <person name="Kumar P."/>
            <person name="Balakrishnan L."/>
            <person name="Muthusamy B."/>
            <person name="Yadav A.K."/>
            <person name="Shrivastava P."/>
            <person name="Marimuthu A."/>
            <person name="Anand S."/>
            <person name="Sundaram H."/>
            <person name="Kingsbury R."/>
            <person name="Harsha H.C."/>
            <person name="Nair B."/>
            <person name="Prasad T.S."/>
            <person name="Chauhan D.S."/>
            <person name="Katoch K."/>
            <person name="Katoch V.M."/>
            <person name="Kumar P."/>
            <person name="Chaerkady R."/>
            <person name="Ramachandran S."/>
            <person name="Dash D."/>
            <person name="Pandey A."/>
        </authorList>
    </citation>
    <scope>IDENTIFICATION BY MASS SPECTROMETRY [LARGE SCALE ANALYSIS]</scope>
    <source>
        <strain>ATCC 25618 / H37Rv</strain>
    </source>
</reference>
<reference evidence="7 8 9" key="4">
    <citation type="journal article" date="2002" name="J. Biol. Chem.">
        <title>Crystal structures of mycolic acid cyclopropane synthases from Mycobacterium tuberculosis.</title>
        <authorList>
            <person name="Huang C.-C."/>
            <person name="Smith C.V."/>
            <person name="Glickman M.S."/>
            <person name="Jacobs W.R. Jr."/>
            <person name="Sacchettini J.C."/>
        </authorList>
    </citation>
    <scope>X-RAY CRYSTALLOGRAPHY (2.21 ANGSTROMS) OF 18-287 IN COMPLEX WITH S-ADENOSYL-L-HOMOCYSTEINE AND SUBSTRATE ANALOG</scope>
    <scope>SUBUNIT</scope>
    <source>
        <strain>ATCC 25618 / H37Rv</strain>
    </source>
</reference>
<evidence type="ECO:0000250" key="1"/>
<evidence type="ECO:0000269" key="2">
    <source>
    </source>
</evidence>
<evidence type="ECO:0000269" key="3">
    <source>
    </source>
</evidence>
<evidence type="ECO:0000303" key="4">
    <source>
    </source>
</evidence>
<evidence type="ECO:0000305" key="5"/>
<evidence type="ECO:0000305" key="6">
    <source>
    </source>
</evidence>
<evidence type="ECO:0007744" key="7">
    <source>
        <dbReference type="PDB" id="1KP9"/>
    </source>
</evidence>
<evidence type="ECO:0007744" key="8">
    <source>
        <dbReference type="PDB" id="1KPG"/>
    </source>
</evidence>
<evidence type="ECO:0007744" key="9">
    <source>
        <dbReference type="PDB" id="1KPH"/>
    </source>
</evidence>
<evidence type="ECO:0007829" key="10">
    <source>
        <dbReference type="PDB" id="1KP9"/>
    </source>
</evidence>
<evidence type="ECO:0007829" key="11">
    <source>
        <dbReference type="PDB" id="1KPG"/>
    </source>
</evidence>
<proteinExistence type="evidence at protein level"/>
<dbReference type="EC" id="2.1.1.79" evidence="3"/>
<dbReference type="EMBL" id="AL123456">
    <property type="protein sequence ID" value="CCP46213.1"/>
    <property type="molecule type" value="Genomic_DNA"/>
</dbReference>
<dbReference type="PIR" id="G70974">
    <property type="entry name" value="G70974"/>
</dbReference>
<dbReference type="RefSeq" id="NP_217909.1">
    <property type="nucleotide sequence ID" value="NC_000962.3"/>
</dbReference>
<dbReference type="RefSeq" id="WP_003900041.1">
    <property type="nucleotide sequence ID" value="NZ_NVQJ01000027.1"/>
</dbReference>
<dbReference type="PDB" id="1KP9">
    <property type="method" value="X-ray"/>
    <property type="resolution" value="2.21 A"/>
    <property type="chains" value="A/B=1-287"/>
</dbReference>
<dbReference type="PDB" id="1KPG">
    <property type="method" value="X-ray"/>
    <property type="resolution" value="2.00 A"/>
    <property type="chains" value="A/B/C/D=2-287"/>
</dbReference>
<dbReference type="PDB" id="1KPH">
    <property type="method" value="X-ray"/>
    <property type="resolution" value="2.00 A"/>
    <property type="chains" value="A/B/C/D=1-287"/>
</dbReference>
<dbReference type="PDBsum" id="1KP9"/>
<dbReference type="PDBsum" id="1KPG"/>
<dbReference type="PDBsum" id="1KPH"/>
<dbReference type="SMR" id="P9WPB7"/>
<dbReference type="FunCoup" id="P9WPB7">
    <property type="interactions" value="7"/>
</dbReference>
<dbReference type="STRING" id="83332.Rv3392c"/>
<dbReference type="DrugBank" id="DB01718">
    <property type="generic name" value="Cetrimonium"/>
</dbReference>
<dbReference type="DrugBank" id="DB05154">
    <property type="generic name" value="Pretomanid"/>
</dbReference>
<dbReference type="PaxDb" id="83332-Rv3392c"/>
<dbReference type="DNASU" id="887961"/>
<dbReference type="GeneID" id="887961"/>
<dbReference type="KEGG" id="mtu:Rv3392c"/>
<dbReference type="KEGG" id="mtv:RVBD_3392c"/>
<dbReference type="TubercuList" id="Rv3392c"/>
<dbReference type="eggNOG" id="COG2230">
    <property type="taxonomic scope" value="Bacteria"/>
</dbReference>
<dbReference type="InParanoid" id="P9WPB7"/>
<dbReference type="OrthoDB" id="9782855at2"/>
<dbReference type="PhylomeDB" id="P9WPB7"/>
<dbReference type="UniPathway" id="UPA00915"/>
<dbReference type="EvolutionaryTrace" id="P9WPB7"/>
<dbReference type="Proteomes" id="UP000001584">
    <property type="component" value="Chromosome"/>
</dbReference>
<dbReference type="GO" id="GO:0005737">
    <property type="term" value="C:cytoplasm"/>
    <property type="evidence" value="ECO:0007669"/>
    <property type="project" value="UniProtKB-SubCell"/>
</dbReference>
<dbReference type="GO" id="GO:0005886">
    <property type="term" value="C:plasma membrane"/>
    <property type="evidence" value="ECO:0007005"/>
    <property type="project" value="MTBBASE"/>
</dbReference>
<dbReference type="GO" id="GO:0008825">
    <property type="term" value="F:cyclopropane-fatty-acyl-phospholipid synthase activity"/>
    <property type="evidence" value="ECO:0000314"/>
    <property type="project" value="MTBBASE"/>
</dbReference>
<dbReference type="GO" id="GO:0008610">
    <property type="term" value="P:lipid biosynthetic process"/>
    <property type="evidence" value="ECO:0000314"/>
    <property type="project" value="UniProtKB"/>
</dbReference>
<dbReference type="GO" id="GO:0032259">
    <property type="term" value="P:methylation"/>
    <property type="evidence" value="ECO:0007669"/>
    <property type="project" value="UniProtKB-KW"/>
</dbReference>
<dbReference type="GO" id="GO:0071768">
    <property type="term" value="P:mycolic acid biosynthetic process"/>
    <property type="evidence" value="ECO:0000314"/>
    <property type="project" value="MTBBASE"/>
</dbReference>
<dbReference type="GO" id="GO:0046500">
    <property type="term" value="P:S-adenosylmethionine metabolic process"/>
    <property type="evidence" value="ECO:0000314"/>
    <property type="project" value="MTBBASE"/>
</dbReference>
<dbReference type="CDD" id="cd02440">
    <property type="entry name" value="AdoMet_MTases"/>
    <property type="match status" value="1"/>
</dbReference>
<dbReference type="FunFam" id="3.40.50.150:FF:000115">
    <property type="entry name" value="Cyclopropane mycolic acid synthase 1"/>
    <property type="match status" value="1"/>
</dbReference>
<dbReference type="Gene3D" id="3.40.50.150">
    <property type="entry name" value="Vaccinia Virus protein VP39"/>
    <property type="match status" value="1"/>
</dbReference>
<dbReference type="InterPro" id="IPR050723">
    <property type="entry name" value="CFA/CMAS"/>
</dbReference>
<dbReference type="InterPro" id="IPR003333">
    <property type="entry name" value="CMAS"/>
</dbReference>
<dbReference type="InterPro" id="IPR047672">
    <property type="entry name" value="CMAS_actinobact"/>
</dbReference>
<dbReference type="InterPro" id="IPR029063">
    <property type="entry name" value="SAM-dependent_MTases_sf"/>
</dbReference>
<dbReference type="NCBIfam" id="NF040660">
    <property type="entry name" value="mycolic_MTase"/>
    <property type="match status" value="1"/>
</dbReference>
<dbReference type="PANTHER" id="PTHR43667">
    <property type="entry name" value="CYCLOPROPANE-FATTY-ACYL-PHOSPHOLIPID SYNTHASE"/>
    <property type="match status" value="1"/>
</dbReference>
<dbReference type="PANTHER" id="PTHR43667:SF1">
    <property type="entry name" value="CYCLOPROPANE-FATTY-ACYL-PHOSPHOLIPID SYNTHASE"/>
    <property type="match status" value="1"/>
</dbReference>
<dbReference type="Pfam" id="PF02353">
    <property type="entry name" value="CMAS"/>
    <property type="match status" value="1"/>
</dbReference>
<dbReference type="PIRSF" id="PIRSF003085">
    <property type="entry name" value="CMAS"/>
    <property type="match status" value="1"/>
</dbReference>
<dbReference type="SUPFAM" id="SSF53335">
    <property type="entry name" value="S-adenosyl-L-methionine-dependent methyltransferases"/>
    <property type="match status" value="1"/>
</dbReference>
<feature type="chain" id="PRO_0000089566" description="Cyclopropane mycolic acid synthase 1">
    <location>
        <begin position="1"/>
        <end position="287"/>
    </location>
</feature>
<feature type="active site" evidence="5">
    <location>
        <position position="269"/>
    </location>
</feature>
<feature type="binding site" evidence="2">
    <location>
        <begin position="33"/>
        <end position="34"/>
    </location>
    <ligand>
        <name>S-adenosyl-L-methionine</name>
        <dbReference type="ChEBI" id="CHEBI:59789"/>
    </ligand>
</feature>
<feature type="binding site" evidence="2">
    <location>
        <begin position="68"/>
        <end position="76"/>
    </location>
    <ligand>
        <name>S-adenosyl-L-methionine</name>
        <dbReference type="ChEBI" id="CHEBI:59789"/>
    </ligand>
</feature>
<feature type="binding site" evidence="2">
    <location>
        <begin position="94"/>
        <end position="99"/>
    </location>
    <ligand>
        <name>S-adenosyl-L-methionine</name>
        <dbReference type="ChEBI" id="CHEBI:59789"/>
    </ligand>
</feature>
<feature type="binding site" evidence="2">
    <location>
        <begin position="123"/>
        <end position="124"/>
    </location>
    <ligand>
        <name>S-adenosyl-L-methionine</name>
        <dbReference type="ChEBI" id="CHEBI:59789"/>
    </ligand>
</feature>
<feature type="helix" evidence="11">
    <location>
        <begin position="9"/>
        <end position="16"/>
    </location>
</feature>
<feature type="helix" evidence="11">
    <location>
        <begin position="20"/>
        <end position="23"/>
    </location>
</feature>
<feature type="turn" evidence="11">
    <location>
        <begin position="24"/>
        <end position="26"/>
    </location>
</feature>
<feature type="helix" evidence="11">
    <location>
        <begin position="45"/>
        <end position="57"/>
    </location>
</feature>
<feature type="turn" evidence="11">
    <location>
        <begin position="58"/>
        <end position="61"/>
    </location>
</feature>
<feature type="strand" evidence="11">
    <location>
        <begin position="67"/>
        <end position="72"/>
    </location>
</feature>
<feature type="helix" evidence="11">
    <location>
        <begin position="77"/>
        <end position="86"/>
    </location>
</feature>
<feature type="strand" evidence="11">
    <location>
        <begin position="89"/>
        <end position="95"/>
    </location>
</feature>
<feature type="helix" evidence="11">
    <location>
        <begin position="97"/>
        <end position="108"/>
    </location>
</feature>
<feature type="strand" evidence="10">
    <location>
        <begin position="112"/>
        <end position="114"/>
    </location>
</feature>
<feature type="strand" evidence="11">
    <location>
        <begin position="116"/>
        <end position="121"/>
    </location>
</feature>
<feature type="helix" evidence="11">
    <location>
        <begin position="123"/>
        <end position="125"/>
    </location>
</feature>
<feature type="strand" evidence="11">
    <location>
        <begin position="131"/>
        <end position="137"/>
    </location>
</feature>
<feature type="helix" evidence="11">
    <location>
        <begin position="139"/>
        <end position="141"/>
    </location>
</feature>
<feature type="turn" evidence="11">
    <location>
        <begin position="144"/>
        <end position="146"/>
    </location>
</feature>
<feature type="helix" evidence="11">
    <location>
        <begin position="147"/>
        <end position="157"/>
    </location>
</feature>
<feature type="strand" evidence="11">
    <location>
        <begin position="163"/>
        <end position="171"/>
    </location>
</feature>
<feature type="helix" evidence="11">
    <location>
        <begin position="174"/>
        <end position="177"/>
    </location>
</feature>
<feature type="turn" evidence="11">
    <location>
        <begin position="178"/>
        <end position="181"/>
    </location>
</feature>
<feature type="helix" evidence="11">
    <location>
        <begin position="185"/>
        <end position="198"/>
    </location>
</feature>
<feature type="helix" evidence="11">
    <location>
        <begin position="208"/>
        <end position="216"/>
    </location>
</feature>
<feature type="turn" evidence="11">
    <location>
        <begin position="217"/>
        <end position="219"/>
    </location>
</feature>
<feature type="strand" evidence="11">
    <location>
        <begin position="221"/>
        <end position="227"/>
    </location>
</feature>
<feature type="helix" evidence="11">
    <location>
        <begin position="229"/>
        <end position="245"/>
    </location>
</feature>
<feature type="helix" evidence="11">
    <location>
        <begin position="247"/>
        <end position="253"/>
    </location>
</feature>
<feature type="helix" evidence="11">
    <location>
        <begin position="256"/>
        <end position="274"/>
    </location>
</feature>
<feature type="strand" evidence="11">
    <location>
        <begin position="277"/>
        <end position="286"/>
    </location>
</feature>
<sequence>MPDELKPHFANVQAHYDLSDDFFRLFLDPTQTYSCAYFERDDMTLQEAQIAKIDLALGKLGLQPGMTLLDVGCGWGATMMRAVEKYDVNVVGLTLSKNQANHVQQLVANSENLRSKRVLLAGWEQFDEPVDRIVSIGAFEHFGHERYDAFFSLAHRLLPADGVMLLHTITGLHPKEIHERGLPMSFTFARFLKFIVTEIFPGGRLPSIPMVQECASANGFTVTRVQSLQPHYAKTLDLWSAALQANKGQAIALQSEEVYERYMKYLTGCAEMFRIGYIDVNQFTCQK</sequence>
<comment type="function">
    <text evidence="3">Catalyzes the conversion of a double bond to a cyclopropane ring at the distal position of an alpha mycolic acid via the transfer of a methylene group from S-adenosyl-L-methionine. Cyclopropanated mycolic acids are key factors participating in cell envelope permeability, host immunomodulation and persistence.</text>
</comment>
<comment type="catalytic activity">
    <reaction evidence="3">
        <text>a 1-acyl-2-(9Z)-enoyl-sn-glycero-3-phospholipid + S-adenosyl-L-methionine = a 1-acyl-2-(9-cyclopronane)-acyl-sn-glycero-3-phospholipid + S-adenosyl-L-homocysteine + H(+)</text>
        <dbReference type="Rhea" id="RHEA:11988"/>
        <dbReference type="ChEBI" id="CHEBI:15378"/>
        <dbReference type="ChEBI" id="CHEBI:57856"/>
        <dbReference type="ChEBI" id="CHEBI:59789"/>
        <dbReference type="ChEBI" id="CHEBI:76593"/>
        <dbReference type="ChEBI" id="CHEBI:76594"/>
        <dbReference type="EC" id="2.1.1.79"/>
    </reaction>
</comment>
<comment type="pathway">
    <text evidence="6">Lipid metabolism; mycolic acid biosynthesis.</text>
</comment>
<comment type="subunit">
    <text evidence="2">Homodimer.</text>
</comment>
<comment type="subcellular location">
    <subcellularLocation>
        <location evidence="1">Cytoplasm</location>
    </subcellularLocation>
</comment>
<comment type="similarity">
    <text evidence="5">Belongs to the CFA/CMAS family.</text>
</comment>
<keyword id="KW-0002">3D-structure</keyword>
<keyword id="KW-0963">Cytoplasm</keyword>
<keyword id="KW-0444">Lipid biosynthesis</keyword>
<keyword id="KW-0443">Lipid metabolism</keyword>
<keyword id="KW-0489">Methyltransferase</keyword>
<keyword id="KW-1185">Reference proteome</keyword>
<keyword id="KW-0949">S-adenosyl-L-methionine</keyword>
<keyword id="KW-0808">Transferase</keyword>
<gene>
    <name evidence="4" type="primary">cmaA1</name>
    <name type="synonym">cma1</name>
    <name type="synonym">CMAS-1</name>
    <name type="ordered locus">Rv3392c</name>
    <name type="ORF">MTV004.50</name>
</gene>
<protein>
    <recommendedName>
        <fullName evidence="4">Cyclopropane mycolic acid synthase 1</fullName>
        <shortName evidence="4">CMAS-1</shortName>
        <ecNumber evidence="3">2.1.1.79</ecNumber>
    </recommendedName>
    <alternativeName>
        <fullName>Cyclopropane-fatty-acyl-phospholipid synthase</fullName>
        <shortName>CFA synthase</shortName>
        <shortName>Cyclopropane fatty acid synthase</shortName>
    </alternativeName>
    <alternativeName>
        <fullName>Mycolic acid methyltransferase</fullName>
        <shortName>MA-MT</shortName>
    </alternativeName>
    <alternativeName>
        <fullName>S-adenosylmethionine-dependent methyltransferase</fullName>
        <shortName>AdoMet-MT</shortName>
        <shortName>SAM-MT</shortName>
    </alternativeName>
</protein>
<organism>
    <name type="scientific">Mycobacterium tuberculosis (strain ATCC 25618 / H37Rv)</name>
    <dbReference type="NCBI Taxonomy" id="83332"/>
    <lineage>
        <taxon>Bacteria</taxon>
        <taxon>Bacillati</taxon>
        <taxon>Actinomycetota</taxon>
        <taxon>Actinomycetes</taxon>
        <taxon>Mycobacteriales</taxon>
        <taxon>Mycobacteriaceae</taxon>
        <taxon>Mycobacterium</taxon>
        <taxon>Mycobacterium tuberculosis complex</taxon>
    </lineage>
</organism>
<accession>P9WPB7</accession>
<accession>L0TCE3</accession>
<accession>P0C5C2</accession>
<accession>Q11195</accession>